<protein>
    <recommendedName>
        <fullName evidence="1">Translation initiation factor IF-1</fullName>
    </recommendedName>
</protein>
<feature type="chain" id="PRO_0000095868" description="Translation initiation factor IF-1">
    <location>
        <begin position="1"/>
        <end position="72"/>
    </location>
</feature>
<feature type="domain" description="S1-like" evidence="1">
    <location>
        <begin position="1"/>
        <end position="72"/>
    </location>
</feature>
<keyword id="KW-0963">Cytoplasm</keyword>
<keyword id="KW-0396">Initiation factor</keyword>
<keyword id="KW-0648">Protein biosynthesis</keyword>
<keyword id="KW-0694">RNA-binding</keyword>
<keyword id="KW-0699">rRNA-binding</keyword>
<accession>Q6GEK5</accession>
<sequence>MAKQDVIELEGTVLDTLPNAMFKVELENGHEILAHVSGKIRMNYIRILPGDKVTVEMSPYDLTRGRITYRYK</sequence>
<evidence type="ECO:0000255" key="1">
    <source>
        <dbReference type="HAMAP-Rule" id="MF_00075"/>
    </source>
</evidence>
<reference key="1">
    <citation type="journal article" date="2004" name="Proc. Natl. Acad. Sci. U.S.A.">
        <title>Complete genomes of two clinical Staphylococcus aureus strains: evidence for the rapid evolution of virulence and drug resistance.</title>
        <authorList>
            <person name="Holden M.T.G."/>
            <person name="Feil E.J."/>
            <person name="Lindsay J.A."/>
            <person name="Peacock S.J."/>
            <person name="Day N.P.J."/>
            <person name="Enright M.C."/>
            <person name="Foster T.J."/>
            <person name="Moore C.E."/>
            <person name="Hurst L."/>
            <person name="Atkin R."/>
            <person name="Barron A."/>
            <person name="Bason N."/>
            <person name="Bentley S.D."/>
            <person name="Chillingworth C."/>
            <person name="Chillingworth T."/>
            <person name="Churcher C."/>
            <person name="Clark L."/>
            <person name="Corton C."/>
            <person name="Cronin A."/>
            <person name="Doggett J."/>
            <person name="Dowd L."/>
            <person name="Feltwell T."/>
            <person name="Hance Z."/>
            <person name="Harris B."/>
            <person name="Hauser H."/>
            <person name="Holroyd S."/>
            <person name="Jagels K."/>
            <person name="James K.D."/>
            <person name="Lennard N."/>
            <person name="Line A."/>
            <person name="Mayes R."/>
            <person name="Moule S."/>
            <person name="Mungall K."/>
            <person name="Ormond D."/>
            <person name="Quail M.A."/>
            <person name="Rabbinowitsch E."/>
            <person name="Rutherford K.M."/>
            <person name="Sanders M."/>
            <person name="Sharp S."/>
            <person name="Simmonds M."/>
            <person name="Stevens K."/>
            <person name="Whitehead S."/>
            <person name="Barrell B.G."/>
            <person name="Spratt B.G."/>
            <person name="Parkhill J."/>
        </authorList>
    </citation>
    <scope>NUCLEOTIDE SEQUENCE [LARGE SCALE GENOMIC DNA]</scope>
    <source>
        <strain>MRSA252</strain>
    </source>
</reference>
<organism>
    <name type="scientific">Staphylococcus aureus (strain MRSA252)</name>
    <dbReference type="NCBI Taxonomy" id="282458"/>
    <lineage>
        <taxon>Bacteria</taxon>
        <taxon>Bacillati</taxon>
        <taxon>Bacillota</taxon>
        <taxon>Bacilli</taxon>
        <taxon>Bacillales</taxon>
        <taxon>Staphylococcaceae</taxon>
        <taxon>Staphylococcus</taxon>
    </lineage>
</organism>
<proteinExistence type="inferred from homology"/>
<name>IF1_STAAR</name>
<comment type="function">
    <text evidence="1">One of the essential components for the initiation of protein synthesis. Stabilizes the binding of IF-2 and IF-3 on the 30S subunit to which N-formylmethionyl-tRNA(fMet) subsequently binds. Helps modulate mRNA selection, yielding the 30S pre-initiation complex (PIC). Upon addition of the 50S ribosomal subunit IF-1, IF-2 and IF-3 are released leaving the mature 70S translation initiation complex.</text>
</comment>
<comment type="subunit">
    <text evidence="1">Component of the 30S ribosomal translation pre-initiation complex which assembles on the 30S ribosome in the order IF-2 and IF-3, IF-1 and N-formylmethionyl-tRNA(fMet); mRNA recruitment can occur at any time during PIC assembly.</text>
</comment>
<comment type="subcellular location">
    <subcellularLocation>
        <location evidence="1">Cytoplasm</location>
    </subcellularLocation>
</comment>
<comment type="similarity">
    <text evidence="1">Belongs to the IF-1 family.</text>
</comment>
<gene>
    <name evidence="1" type="primary">infA</name>
    <name type="ordered locus">SAR2313</name>
</gene>
<dbReference type="EMBL" id="BX571856">
    <property type="protein sequence ID" value="CAG41294.1"/>
    <property type="molecule type" value="Genomic_DNA"/>
</dbReference>
<dbReference type="RefSeq" id="WP_001118443.1">
    <property type="nucleotide sequence ID" value="NC_002952.2"/>
</dbReference>
<dbReference type="SMR" id="Q6GEK5"/>
<dbReference type="GeneID" id="98346540"/>
<dbReference type="KEGG" id="sar:SAR2313"/>
<dbReference type="HOGENOM" id="CLU_151267_1_0_9"/>
<dbReference type="Proteomes" id="UP000000596">
    <property type="component" value="Chromosome"/>
</dbReference>
<dbReference type="GO" id="GO:0005829">
    <property type="term" value="C:cytosol"/>
    <property type="evidence" value="ECO:0007669"/>
    <property type="project" value="TreeGrafter"/>
</dbReference>
<dbReference type="GO" id="GO:0043022">
    <property type="term" value="F:ribosome binding"/>
    <property type="evidence" value="ECO:0007669"/>
    <property type="project" value="UniProtKB-UniRule"/>
</dbReference>
<dbReference type="GO" id="GO:0019843">
    <property type="term" value="F:rRNA binding"/>
    <property type="evidence" value="ECO:0007669"/>
    <property type="project" value="UniProtKB-UniRule"/>
</dbReference>
<dbReference type="GO" id="GO:0003743">
    <property type="term" value="F:translation initiation factor activity"/>
    <property type="evidence" value="ECO:0007669"/>
    <property type="project" value="UniProtKB-UniRule"/>
</dbReference>
<dbReference type="CDD" id="cd04451">
    <property type="entry name" value="S1_IF1"/>
    <property type="match status" value="1"/>
</dbReference>
<dbReference type="FunFam" id="2.40.50.140:FF:000002">
    <property type="entry name" value="Translation initiation factor IF-1"/>
    <property type="match status" value="1"/>
</dbReference>
<dbReference type="Gene3D" id="2.40.50.140">
    <property type="entry name" value="Nucleic acid-binding proteins"/>
    <property type="match status" value="1"/>
</dbReference>
<dbReference type="HAMAP" id="MF_00075">
    <property type="entry name" value="IF_1"/>
    <property type="match status" value="1"/>
</dbReference>
<dbReference type="InterPro" id="IPR012340">
    <property type="entry name" value="NA-bd_OB-fold"/>
</dbReference>
<dbReference type="InterPro" id="IPR006196">
    <property type="entry name" value="RNA-binding_domain_S1_IF1"/>
</dbReference>
<dbReference type="InterPro" id="IPR003029">
    <property type="entry name" value="S1_domain"/>
</dbReference>
<dbReference type="InterPro" id="IPR004368">
    <property type="entry name" value="TIF_IF1"/>
</dbReference>
<dbReference type="NCBIfam" id="TIGR00008">
    <property type="entry name" value="infA"/>
    <property type="match status" value="1"/>
</dbReference>
<dbReference type="PANTHER" id="PTHR33370">
    <property type="entry name" value="TRANSLATION INITIATION FACTOR IF-1, CHLOROPLASTIC"/>
    <property type="match status" value="1"/>
</dbReference>
<dbReference type="PANTHER" id="PTHR33370:SF1">
    <property type="entry name" value="TRANSLATION INITIATION FACTOR IF-1, CHLOROPLASTIC"/>
    <property type="match status" value="1"/>
</dbReference>
<dbReference type="Pfam" id="PF01176">
    <property type="entry name" value="eIF-1a"/>
    <property type="match status" value="1"/>
</dbReference>
<dbReference type="SMART" id="SM00316">
    <property type="entry name" value="S1"/>
    <property type="match status" value="1"/>
</dbReference>
<dbReference type="SUPFAM" id="SSF50249">
    <property type="entry name" value="Nucleic acid-binding proteins"/>
    <property type="match status" value="1"/>
</dbReference>
<dbReference type="PROSITE" id="PS50832">
    <property type="entry name" value="S1_IF1_TYPE"/>
    <property type="match status" value="1"/>
</dbReference>